<feature type="chain" id="PRO_0000378444" description="Probable RNA-dependent RNA polymerase SHL2">
    <location>
        <begin position="1"/>
        <end position="1218"/>
    </location>
</feature>
<name>SHL2_ORYSJ</name>
<gene>
    <name type="primary">SHL2</name>
    <name type="ordered locus">Os01g0527600</name>
    <name type="ordered locus">LOC_Os01g34350</name>
    <name type="ORF">B1074C08.31</name>
</gene>
<comment type="function">
    <text evidence="1">Involved in the RNA silencing pathway. Probably required for the generation of small interfering RNAs (siRNAs). Regulates shoot apical meristem (SAM) initiation and maintenance and leaf polarization through the trans-acting siRNAS (ta-siRNAs) pathway which probably modulates the expression of the ARF2, ARF3, ARF4, ARF14 and ARF15 genes.</text>
</comment>
<comment type="catalytic activity">
    <reaction>
        <text>RNA(n) + a ribonucleoside 5'-triphosphate = RNA(n+1) + diphosphate</text>
        <dbReference type="Rhea" id="RHEA:21248"/>
        <dbReference type="Rhea" id="RHEA-COMP:14527"/>
        <dbReference type="Rhea" id="RHEA-COMP:17342"/>
        <dbReference type="ChEBI" id="CHEBI:33019"/>
        <dbReference type="ChEBI" id="CHEBI:61557"/>
        <dbReference type="ChEBI" id="CHEBI:140395"/>
        <dbReference type="EC" id="2.7.7.48"/>
    </reaction>
</comment>
<comment type="disruption phenotype">
    <text evidence="1">Lack of the shoot apical meristem (SAM) in the embryo, but formation of radicle and scutellum. In weak alleles, formation of an incomplete SAM and abnormal leaves production.</text>
</comment>
<comment type="similarity">
    <text evidence="2">Belongs to the RdRP family.</text>
</comment>
<comment type="sequence caution" evidence="2">
    <conflict type="erroneous initiation">
        <sequence resource="EMBL-CDS" id="BAF05143"/>
    </conflict>
</comment>
<keyword id="KW-0548">Nucleotidyltransferase</keyword>
<keyword id="KW-1185">Reference proteome</keyword>
<keyword id="KW-0694">RNA-binding</keyword>
<keyword id="KW-0696">RNA-directed RNA polymerase</keyword>
<keyword id="KW-0943">RNA-mediated gene silencing</keyword>
<keyword id="KW-0808">Transferase</keyword>
<protein>
    <recommendedName>
        <fullName>Probable RNA-dependent RNA polymerase SHL2</fullName>
        <ecNumber>2.7.7.48</ecNumber>
    </recommendedName>
    <alternativeName>
        <fullName>Protein SHOOTLESS 2</fullName>
    </alternativeName>
</protein>
<proteinExistence type="evidence at transcript level"/>
<organism>
    <name type="scientific">Oryza sativa subsp. japonica</name>
    <name type="common">Rice</name>
    <dbReference type="NCBI Taxonomy" id="39947"/>
    <lineage>
        <taxon>Eukaryota</taxon>
        <taxon>Viridiplantae</taxon>
        <taxon>Streptophyta</taxon>
        <taxon>Embryophyta</taxon>
        <taxon>Tracheophyta</taxon>
        <taxon>Spermatophyta</taxon>
        <taxon>Magnoliopsida</taxon>
        <taxon>Liliopsida</taxon>
        <taxon>Poales</taxon>
        <taxon>Poaceae</taxon>
        <taxon>BOP clade</taxon>
        <taxon>Oryzoideae</taxon>
        <taxon>Oryzeae</taxon>
        <taxon>Oryzinae</taxon>
        <taxon>Oryza</taxon>
        <taxon>Oryza sativa</taxon>
    </lineage>
</organism>
<reference key="1">
    <citation type="journal article" date="2007" name="Proc. Natl. Acad. Sci. U.S.A.">
        <title>The small interfering RNA production pathway is required for shoot meristem initiation in rice.</title>
        <authorList>
            <person name="Nagasaki H."/>
            <person name="Itoh J."/>
            <person name="Hayashi K."/>
            <person name="Hibara K."/>
            <person name="Satoh-Nagasawa N."/>
            <person name="Nosaka M."/>
            <person name="Mukouhata M."/>
            <person name="Ashikari M."/>
            <person name="Kitano H."/>
            <person name="Matsuoka M."/>
            <person name="Nagato Y."/>
            <person name="Sato Y."/>
        </authorList>
    </citation>
    <scope>NUCLEOTIDE SEQUENCE [MRNA]</scope>
    <scope>FUNCTION</scope>
    <scope>DISRUPTION PHENOTYPE</scope>
    <source>
        <strain>cv. Nipponbare</strain>
    </source>
</reference>
<reference key="2">
    <citation type="journal article" date="2002" name="Nature">
        <title>The genome sequence and structure of rice chromosome 1.</title>
        <authorList>
            <person name="Sasaki T."/>
            <person name="Matsumoto T."/>
            <person name="Yamamoto K."/>
            <person name="Sakata K."/>
            <person name="Baba T."/>
            <person name="Katayose Y."/>
            <person name="Wu J."/>
            <person name="Niimura Y."/>
            <person name="Cheng Z."/>
            <person name="Nagamura Y."/>
            <person name="Antonio B.A."/>
            <person name="Kanamori H."/>
            <person name="Hosokawa S."/>
            <person name="Masukawa M."/>
            <person name="Arikawa K."/>
            <person name="Chiden Y."/>
            <person name="Hayashi M."/>
            <person name="Okamoto M."/>
            <person name="Ando T."/>
            <person name="Aoki H."/>
            <person name="Arita K."/>
            <person name="Hamada M."/>
            <person name="Harada C."/>
            <person name="Hijishita S."/>
            <person name="Honda M."/>
            <person name="Ichikawa Y."/>
            <person name="Idonuma A."/>
            <person name="Iijima M."/>
            <person name="Ikeda M."/>
            <person name="Ikeno M."/>
            <person name="Ito S."/>
            <person name="Ito T."/>
            <person name="Ito Y."/>
            <person name="Ito Y."/>
            <person name="Iwabuchi A."/>
            <person name="Kamiya K."/>
            <person name="Karasawa W."/>
            <person name="Katagiri S."/>
            <person name="Kikuta A."/>
            <person name="Kobayashi N."/>
            <person name="Kono I."/>
            <person name="Machita K."/>
            <person name="Maehara T."/>
            <person name="Mizuno H."/>
            <person name="Mizubayashi T."/>
            <person name="Mukai Y."/>
            <person name="Nagasaki H."/>
            <person name="Nakashima M."/>
            <person name="Nakama Y."/>
            <person name="Nakamichi Y."/>
            <person name="Nakamura M."/>
            <person name="Namiki N."/>
            <person name="Negishi M."/>
            <person name="Ohta I."/>
            <person name="Ono N."/>
            <person name="Saji S."/>
            <person name="Sakai K."/>
            <person name="Shibata M."/>
            <person name="Shimokawa T."/>
            <person name="Shomura A."/>
            <person name="Song J."/>
            <person name="Takazaki Y."/>
            <person name="Terasawa K."/>
            <person name="Tsuji K."/>
            <person name="Waki K."/>
            <person name="Yamagata H."/>
            <person name="Yamane H."/>
            <person name="Yoshiki S."/>
            <person name="Yoshihara R."/>
            <person name="Yukawa K."/>
            <person name="Zhong H."/>
            <person name="Iwama H."/>
            <person name="Endo T."/>
            <person name="Ito H."/>
            <person name="Hahn J.H."/>
            <person name="Kim H.-I."/>
            <person name="Eun M.-Y."/>
            <person name="Yano M."/>
            <person name="Jiang J."/>
            <person name="Gojobori T."/>
        </authorList>
    </citation>
    <scope>NUCLEOTIDE SEQUENCE [LARGE SCALE GENOMIC DNA]</scope>
    <source>
        <strain>cv. Nipponbare</strain>
    </source>
</reference>
<reference key="3">
    <citation type="journal article" date="2005" name="Nature">
        <title>The map-based sequence of the rice genome.</title>
        <authorList>
            <consortium name="International rice genome sequencing project (IRGSP)"/>
        </authorList>
    </citation>
    <scope>NUCLEOTIDE SEQUENCE [LARGE SCALE GENOMIC DNA]</scope>
    <source>
        <strain>cv. Nipponbare</strain>
    </source>
</reference>
<reference key="4">
    <citation type="journal article" date="2008" name="Nucleic Acids Res.">
        <title>The rice annotation project database (RAP-DB): 2008 update.</title>
        <authorList>
            <consortium name="The rice annotation project (RAP)"/>
        </authorList>
    </citation>
    <scope>GENOME REANNOTATION</scope>
    <source>
        <strain>cv. Nipponbare</strain>
    </source>
</reference>
<reference key="5">
    <citation type="journal article" date="2013" name="Rice">
        <title>Improvement of the Oryza sativa Nipponbare reference genome using next generation sequence and optical map data.</title>
        <authorList>
            <person name="Kawahara Y."/>
            <person name="de la Bastide M."/>
            <person name="Hamilton J.P."/>
            <person name="Kanamori H."/>
            <person name="McCombie W.R."/>
            <person name="Ouyang S."/>
            <person name="Schwartz D.C."/>
            <person name="Tanaka T."/>
            <person name="Wu J."/>
            <person name="Zhou S."/>
            <person name="Childs K.L."/>
            <person name="Davidson R.M."/>
            <person name="Lin H."/>
            <person name="Quesada-Ocampo L."/>
            <person name="Vaillancourt B."/>
            <person name="Sakai H."/>
            <person name="Lee S.S."/>
            <person name="Kim J."/>
            <person name="Numa H."/>
            <person name="Itoh T."/>
            <person name="Buell C.R."/>
            <person name="Matsumoto T."/>
        </authorList>
    </citation>
    <scope>GENOME REANNOTATION</scope>
    <source>
        <strain>cv. Nipponbare</strain>
    </source>
</reference>
<reference key="6">
    <citation type="journal article" date="2008" name="BMC Genomics">
        <title>Genome-wide identification, organization and phylogenetic analysis of dicer-like, argonaute and RNA-dependent RNA polymerase gene families and their expression analysis during reproductive development and stress in rice.</title>
        <authorList>
            <person name="Kapoor M."/>
            <person name="Arora R."/>
            <person name="Lama T."/>
            <person name="Nijhawan A."/>
            <person name="Khurana J.P."/>
            <person name="Tyagi A.K."/>
            <person name="Kapoor S."/>
        </authorList>
    </citation>
    <scope>GENE FAMILY</scope>
    <scope>NOMENCLATURE</scope>
</reference>
<accession>Q8LHH9</accession>
<accession>Q0JM85</accession>
<evidence type="ECO:0000269" key="1">
    <source>
    </source>
</evidence>
<evidence type="ECO:0000305" key="2"/>
<sequence>MRSPRGGAAAQPSGRRGDTTAAAAGDLVTTQVSLGGFDAGVAAGDLADFLEHEVGLVWRCRVKTSWTPPDSYPDFALPTAPASASAAAAPPRYDRVPPHAFVHFARPEGARRAADLAGETRLILRGKPLRVASAPDSSLRVSRRSSIAPFRFPDVRLEVGALPSPGAFLAAWRGPDAGLDLSVDPFDGCCRLVFTRDTAFTFPGFREVAAIRCDVKLEFPVRDVLEVRLYRLDCSLLLRLAAAPLVHYRTADDDFHEPVPFDLLDDDDPWIRTTDITPSGAIGRCGVYRISFSARFWPKMDRALDYMRERRVAIVDCGGGWGPRRGLTVRDELEFGEPMQDVFFCLQHAEGLKFPLLFMVNALVHKGIINQHQLTPEFFSLLGRSEENVNVAALRDFWGDKFPVFDACGRLKKALNRVARNPKLLCSKVGDDHAEVRRLVITPTRAYCLPPEVERSNRVLRHYHEVADRFLRVTFMDEGMQVLNNNVLNSFTAPIVKDLMSNFFQQKTTVYKRVRMLLTEGFHMCGRKYSFLAFSSNQLRDKSAWFFAEDRKTTVEAIRKWMGRFTSKNVAKHAARMGQCFSSTYATVTMRPDEVDESFDDVVHNEYIFSDGIGKITPDLALEVAERLQLTDNPPSAYQIRFAGFKGVIAVWQGHGDGTRLFLRPSMRKFESNHLVLEVVSWTKFQPGFLNRQIIILLSSLNVPDSIFWQMQETMLSNLNNILSDRDVAFEVLTTSCADDGNTAALMLSAGFEPRTEPHLKAMLLAIRSAQLQDLLEKARIFVPKGRWLMGCLDELGVLEQGQCFIRATVPSLNSYFVKHGSRFSSTDKNTEVILGTVVIAKNPCLHPGDVRILEAVDVPELHHLVDCLVFPQKGERPHANEASGSDLDGDLYFVTWDEKLIPPGKKSWNPMDYSPPEAKQLPRQVSQHDIIDFFLKNMISENLGRICNAHVVHADLSEYGAMDEKCIHLAELAATAVDFPKTGKLAIMPPHLKPKVYPDFMGKEDGQSYKSEKILGRLYRSIQEASNGDVVSQEVCTPNDLPYDIDLEVPGASDFLASAWQCKCSYDAQLSALLSQYRVRTEAELVTGHITFLVKNSSKKQGDIKDRLKTAYSALRKEFKSTFESIASDQCEIGDDEKNLLYEMKASAWYQVTYHPKWVEKSRGILGPDGEEIPASLSFAWIPVDYLARIKLRCHGKVRVEGQKPVERLAAYISERI</sequence>
<dbReference type="EC" id="2.7.7.48"/>
<dbReference type="EMBL" id="AB353923">
    <property type="protein sequence ID" value="BAF80151.1"/>
    <property type="molecule type" value="mRNA"/>
</dbReference>
<dbReference type="EMBL" id="AP004357">
    <property type="protein sequence ID" value="BAC00725.1"/>
    <property type="molecule type" value="Genomic_DNA"/>
</dbReference>
<dbReference type="EMBL" id="AP008207">
    <property type="protein sequence ID" value="BAF05143.1"/>
    <property type="status" value="ALT_INIT"/>
    <property type="molecule type" value="Genomic_DNA"/>
</dbReference>
<dbReference type="EMBL" id="AP014957">
    <property type="status" value="NOT_ANNOTATED_CDS"/>
    <property type="molecule type" value="Genomic_DNA"/>
</dbReference>
<dbReference type="RefSeq" id="XP_015622237.1">
    <property type="nucleotide sequence ID" value="XM_015766751.1"/>
</dbReference>
<dbReference type="SMR" id="Q8LHH9"/>
<dbReference type="FunCoup" id="Q8LHH9">
    <property type="interactions" value="674"/>
</dbReference>
<dbReference type="STRING" id="39947.Q8LHH9"/>
<dbReference type="PaxDb" id="39947-Q8LHH9"/>
<dbReference type="EnsemblPlants" id="Os01t0527600-01">
    <property type="protein sequence ID" value="Os01t0527600-01"/>
    <property type="gene ID" value="Os01g0527600"/>
</dbReference>
<dbReference type="Gramene" id="Os01t0527600-01">
    <property type="protein sequence ID" value="Os01t0527600-01"/>
    <property type="gene ID" value="Os01g0527600"/>
</dbReference>
<dbReference type="KEGG" id="dosa:Os01g0527600"/>
<dbReference type="eggNOG" id="KOG0988">
    <property type="taxonomic scope" value="Eukaryota"/>
</dbReference>
<dbReference type="HOGENOM" id="CLU_001366_1_1_1"/>
<dbReference type="InParanoid" id="Q8LHH9"/>
<dbReference type="OrthoDB" id="6513042at2759"/>
<dbReference type="Proteomes" id="UP000000763">
    <property type="component" value="Chromosome 1"/>
</dbReference>
<dbReference type="Proteomes" id="UP000059680">
    <property type="component" value="Chromosome 1"/>
</dbReference>
<dbReference type="GO" id="GO:0036464">
    <property type="term" value="C:cytoplasmic ribonucleoprotein granule"/>
    <property type="evidence" value="ECO:0007669"/>
    <property type="project" value="EnsemblPlants"/>
</dbReference>
<dbReference type="GO" id="GO:0031380">
    <property type="term" value="C:nuclear RNA-directed RNA polymerase complex"/>
    <property type="evidence" value="ECO:0000318"/>
    <property type="project" value="GO_Central"/>
</dbReference>
<dbReference type="GO" id="GO:0003723">
    <property type="term" value="F:RNA binding"/>
    <property type="evidence" value="ECO:0007669"/>
    <property type="project" value="UniProtKB-KW"/>
</dbReference>
<dbReference type="GO" id="GO:0003968">
    <property type="term" value="F:RNA-directed RNA polymerase activity"/>
    <property type="evidence" value="ECO:0000318"/>
    <property type="project" value="GO_Central"/>
</dbReference>
<dbReference type="GO" id="GO:0048467">
    <property type="term" value="P:gynoecium development"/>
    <property type="evidence" value="ECO:0007669"/>
    <property type="project" value="EnsemblPlants"/>
</dbReference>
<dbReference type="GO" id="GO:0048366">
    <property type="term" value="P:leaf development"/>
    <property type="evidence" value="ECO:0007669"/>
    <property type="project" value="EnsemblPlants"/>
</dbReference>
<dbReference type="GO" id="GO:0010492">
    <property type="term" value="P:maintenance of shoot apical meristem identity"/>
    <property type="evidence" value="ECO:0000315"/>
    <property type="project" value="UniProtKB"/>
</dbReference>
<dbReference type="GO" id="GO:0048544">
    <property type="term" value="P:recognition of pollen"/>
    <property type="evidence" value="ECO:0007669"/>
    <property type="project" value="EnsemblPlants"/>
</dbReference>
<dbReference type="GO" id="GO:0035194">
    <property type="term" value="P:regulatory ncRNA-mediated post-transcriptional gene silencing"/>
    <property type="evidence" value="ECO:0000315"/>
    <property type="project" value="UniProtKB"/>
</dbReference>
<dbReference type="GO" id="GO:0009616">
    <property type="term" value="P:RNAi-mediated antiviral immune response"/>
    <property type="evidence" value="ECO:0007669"/>
    <property type="project" value="EnsemblPlants"/>
</dbReference>
<dbReference type="GO" id="GO:0030422">
    <property type="term" value="P:siRNA processing"/>
    <property type="evidence" value="ECO:0000318"/>
    <property type="project" value="GO_Central"/>
</dbReference>
<dbReference type="GO" id="GO:0070549">
    <property type="term" value="P:siRNA-mediated gene silencing by inhibition of translation"/>
    <property type="evidence" value="ECO:0007669"/>
    <property type="project" value="EnsemblPlants"/>
</dbReference>
<dbReference type="GO" id="GO:0010267">
    <property type="term" value="P:ta-siRNA processing"/>
    <property type="evidence" value="ECO:0007669"/>
    <property type="project" value="EnsemblPlants"/>
</dbReference>
<dbReference type="InterPro" id="IPR007855">
    <property type="entry name" value="RNA-dep_RNA_pol_euk-typ"/>
</dbReference>
<dbReference type="PANTHER" id="PTHR23079">
    <property type="entry name" value="RNA-DEPENDENT RNA POLYMERASE"/>
    <property type="match status" value="1"/>
</dbReference>
<dbReference type="PANTHER" id="PTHR23079:SF18">
    <property type="entry name" value="RNA-DEPENDENT RNA POLYMERASE 6"/>
    <property type="match status" value="1"/>
</dbReference>
<dbReference type="Pfam" id="PF24572">
    <property type="entry name" value="RBD_RDR6"/>
    <property type="match status" value="1"/>
</dbReference>
<dbReference type="Pfam" id="PF24577">
    <property type="entry name" value="RDR6_2nd"/>
    <property type="match status" value="1"/>
</dbReference>
<dbReference type="Pfam" id="PF05183">
    <property type="entry name" value="RdRP"/>
    <property type="match status" value="1"/>
</dbReference>